<keyword id="KW-0240">DNA-directed RNA polymerase</keyword>
<keyword id="KW-0548">Nucleotidyltransferase</keyword>
<keyword id="KW-1185">Reference proteome</keyword>
<keyword id="KW-0804">Transcription</keyword>
<keyword id="KW-0808">Transferase</keyword>
<evidence type="ECO:0000255" key="1">
    <source>
        <dbReference type="HAMAP-Rule" id="MF_00366"/>
    </source>
</evidence>
<sequence length="110" mass="11842">MSISQSDASLAAVPAVDQFDPSSGASGGYDTPLGITNPPIDELLDRVSSKYALVIYAAKRARQINDYYNQLGEGILEYVGPLVEPGLQEKPLSIALREIHADLLEHTEGE</sequence>
<comment type="function">
    <text evidence="1">Promotes RNA polymerase assembly. Latches the N- and C-terminal regions of the beta' subunit thereby facilitating its interaction with the beta and alpha subunits.</text>
</comment>
<comment type="catalytic activity">
    <reaction evidence="1">
        <text>RNA(n) + a ribonucleoside 5'-triphosphate = RNA(n+1) + diphosphate</text>
        <dbReference type="Rhea" id="RHEA:21248"/>
        <dbReference type="Rhea" id="RHEA-COMP:14527"/>
        <dbReference type="Rhea" id="RHEA-COMP:17342"/>
        <dbReference type="ChEBI" id="CHEBI:33019"/>
        <dbReference type="ChEBI" id="CHEBI:61557"/>
        <dbReference type="ChEBI" id="CHEBI:140395"/>
        <dbReference type="EC" id="2.7.7.6"/>
    </reaction>
</comment>
<comment type="subunit">
    <text evidence="1">The RNAP catalytic core consists of 2 alpha, 1 beta, 1 beta' and 1 omega subunit. When a sigma factor is associated with the core the holoenzyme is formed, which can initiate transcription.</text>
</comment>
<comment type="similarity">
    <text evidence="1">Belongs to the RNA polymerase subunit omega family.</text>
</comment>
<gene>
    <name evidence="1" type="primary">rpoZ</name>
    <name type="ordered locus">MRA_1399</name>
</gene>
<organism>
    <name type="scientific">Mycobacterium tuberculosis (strain ATCC 25177 / H37Ra)</name>
    <dbReference type="NCBI Taxonomy" id="419947"/>
    <lineage>
        <taxon>Bacteria</taxon>
        <taxon>Bacillati</taxon>
        <taxon>Actinomycetota</taxon>
        <taxon>Actinomycetes</taxon>
        <taxon>Mycobacteriales</taxon>
        <taxon>Mycobacteriaceae</taxon>
        <taxon>Mycobacterium</taxon>
        <taxon>Mycobacterium tuberculosis complex</taxon>
    </lineage>
</organism>
<dbReference type="EC" id="2.7.7.6" evidence="1"/>
<dbReference type="EMBL" id="CP000611">
    <property type="protein sequence ID" value="ABQ73142.1"/>
    <property type="molecule type" value="Genomic_DNA"/>
</dbReference>
<dbReference type="RefSeq" id="WP_003407248.1">
    <property type="nucleotide sequence ID" value="NZ_CP016972.1"/>
</dbReference>
<dbReference type="SMR" id="A5U292"/>
<dbReference type="GeneID" id="45425368"/>
<dbReference type="KEGG" id="mra:MRA_1399"/>
<dbReference type="eggNOG" id="COG1758">
    <property type="taxonomic scope" value="Bacteria"/>
</dbReference>
<dbReference type="HOGENOM" id="CLU_125406_1_1_11"/>
<dbReference type="Proteomes" id="UP000001988">
    <property type="component" value="Chromosome"/>
</dbReference>
<dbReference type="GO" id="GO:0000428">
    <property type="term" value="C:DNA-directed RNA polymerase complex"/>
    <property type="evidence" value="ECO:0007669"/>
    <property type="project" value="UniProtKB-KW"/>
</dbReference>
<dbReference type="GO" id="GO:0003677">
    <property type="term" value="F:DNA binding"/>
    <property type="evidence" value="ECO:0007669"/>
    <property type="project" value="UniProtKB-UniRule"/>
</dbReference>
<dbReference type="GO" id="GO:0003899">
    <property type="term" value="F:DNA-directed RNA polymerase activity"/>
    <property type="evidence" value="ECO:0007669"/>
    <property type="project" value="UniProtKB-UniRule"/>
</dbReference>
<dbReference type="GO" id="GO:0006351">
    <property type="term" value="P:DNA-templated transcription"/>
    <property type="evidence" value="ECO:0007669"/>
    <property type="project" value="UniProtKB-UniRule"/>
</dbReference>
<dbReference type="FunFam" id="3.90.940.10:FF:000002">
    <property type="entry name" value="DNA-directed RNA polymerase subunit omega"/>
    <property type="match status" value="1"/>
</dbReference>
<dbReference type="Gene3D" id="3.90.940.10">
    <property type="match status" value="1"/>
</dbReference>
<dbReference type="HAMAP" id="MF_00366">
    <property type="entry name" value="RNApol_bact_RpoZ"/>
    <property type="match status" value="1"/>
</dbReference>
<dbReference type="InterPro" id="IPR003716">
    <property type="entry name" value="DNA-dir_RNA_pol_omega"/>
</dbReference>
<dbReference type="InterPro" id="IPR006110">
    <property type="entry name" value="Pol_omega/Rpo6/RPB6"/>
</dbReference>
<dbReference type="InterPro" id="IPR036161">
    <property type="entry name" value="RPB6/omega-like_sf"/>
</dbReference>
<dbReference type="NCBIfam" id="TIGR00690">
    <property type="entry name" value="rpoZ"/>
    <property type="match status" value="1"/>
</dbReference>
<dbReference type="PANTHER" id="PTHR34476">
    <property type="entry name" value="DNA-DIRECTED RNA POLYMERASE SUBUNIT OMEGA"/>
    <property type="match status" value="1"/>
</dbReference>
<dbReference type="PANTHER" id="PTHR34476:SF1">
    <property type="entry name" value="DNA-DIRECTED RNA POLYMERASE SUBUNIT OMEGA"/>
    <property type="match status" value="1"/>
</dbReference>
<dbReference type="Pfam" id="PF01192">
    <property type="entry name" value="RNA_pol_Rpb6"/>
    <property type="match status" value="1"/>
</dbReference>
<dbReference type="SMART" id="SM01409">
    <property type="entry name" value="RNA_pol_Rpb6"/>
    <property type="match status" value="1"/>
</dbReference>
<dbReference type="SUPFAM" id="SSF63562">
    <property type="entry name" value="RPB6/omega subunit-like"/>
    <property type="match status" value="1"/>
</dbReference>
<accession>A5U292</accession>
<feature type="chain" id="PRO_1000005961" description="DNA-directed RNA polymerase subunit omega">
    <location>
        <begin position="1"/>
        <end position="110"/>
    </location>
</feature>
<reference key="1">
    <citation type="journal article" date="2008" name="PLoS ONE">
        <title>Genetic basis of virulence attenuation revealed by comparative genomic analysis of Mycobacterium tuberculosis strain H37Ra versus H37Rv.</title>
        <authorList>
            <person name="Zheng H."/>
            <person name="Lu L."/>
            <person name="Wang B."/>
            <person name="Pu S."/>
            <person name="Zhang X."/>
            <person name="Zhu G."/>
            <person name="Shi W."/>
            <person name="Zhang L."/>
            <person name="Wang H."/>
            <person name="Wang S."/>
            <person name="Zhao G."/>
            <person name="Zhang Y."/>
        </authorList>
    </citation>
    <scope>NUCLEOTIDE SEQUENCE [LARGE SCALE GENOMIC DNA]</scope>
    <source>
        <strain>ATCC 25177 / H37Ra</strain>
    </source>
</reference>
<proteinExistence type="inferred from homology"/>
<protein>
    <recommendedName>
        <fullName evidence="1">DNA-directed RNA polymerase subunit omega</fullName>
        <shortName evidence="1">RNAP omega subunit</shortName>
        <ecNumber evidence="1">2.7.7.6</ecNumber>
    </recommendedName>
    <alternativeName>
        <fullName evidence="1">RNA polymerase omega subunit</fullName>
    </alternativeName>
    <alternativeName>
        <fullName evidence="1">Transcriptase subunit omega</fullName>
    </alternativeName>
</protein>
<name>RPOZ_MYCTA</name>